<protein>
    <recommendedName>
        <fullName evidence="1">Na(+)/H(+) antiporter NhaA 1</fullName>
    </recommendedName>
    <alternativeName>
        <fullName evidence="1">Sodium/proton antiporter NhaA 1</fullName>
    </alternativeName>
</protein>
<evidence type="ECO:0000255" key="1">
    <source>
        <dbReference type="HAMAP-Rule" id="MF_01844"/>
    </source>
</evidence>
<sequence length="397" mass="41403">MEGLQPVRSLFTRFFQLEAASGLLLIAAAVLALIINNSPLSYLYGGLLEVPVAVQVGALNIAKPLLLWINDGLMALFFLLIGLEVKREVVDGHLSKPSQVILPATAAVGGMVVPALIYWFINRDNPAAVAGWAIPTATDIAFALGVLALLGKRVPVSLKLFLMTLAIIDDLGAIIVIALFYSGTLSSVSLLLAAACLLVLVAMNRLGVIKLGPYMIVGLILWVCVLKSGVHATLAGVALAFCIPLRTRNAESSPLLALEHALHPWVAYAILPIFAFANAGVSLAGMTVDSFTHPVPMGITIGLLLGKTVGVFGLTWVAVKLRLAALPAGAGWGQILGVAILCGIGFTMSLFVGSLAFAPGSSEYAGMDRMGILTGSFFAAVIGYAVTAMASRKTSIA</sequence>
<comment type="function">
    <text evidence="1">Na(+)/H(+) antiporter that extrudes sodium in exchange for external protons.</text>
</comment>
<comment type="catalytic activity">
    <reaction evidence="1">
        <text>Na(+)(in) + 2 H(+)(out) = Na(+)(out) + 2 H(+)(in)</text>
        <dbReference type="Rhea" id="RHEA:29251"/>
        <dbReference type="ChEBI" id="CHEBI:15378"/>
        <dbReference type="ChEBI" id="CHEBI:29101"/>
    </reaction>
    <physiologicalReaction direction="left-to-right" evidence="1">
        <dbReference type="Rhea" id="RHEA:29252"/>
    </physiologicalReaction>
</comment>
<comment type="subcellular location">
    <subcellularLocation>
        <location evidence="1">Cell inner membrane</location>
        <topology evidence="1">Multi-pass membrane protein</topology>
    </subcellularLocation>
</comment>
<comment type="similarity">
    <text evidence="1">Belongs to the NhaA Na(+)/H(+) (TC 2.A.33) antiporter family.</text>
</comment>
<dbReference type="EMBL" id="AE015451">
    <property type="protein sequence ID" value="AAN66757.1"/>
    <property type="molecule type" value="Genomic_DNA"/>
</dbReference>
<dbReference type="RefSeq" id="NP_743293.1">
    <property type="nucleotide sequence ID" value="NC_002947.4"/>
</dbReference>
<dbReference type="SMR" id="Q88NS2"/>
<dbReference type="STRING" id="160488.PP_1132"/>
<dbReference type="PaxDb" id="160488-PP_1132"/>
<dbReference type="KEGG" id="ppu:PP_1132"/>
<dbReference type="PATRIC" id="fig|160488.4.peg.1201"/>
<dbReference type="eggNOG" id="COG3004">
    <property type="taxonomic scope" value="Bacteria"/>
</dbReference>
<dbReference type="HOGENOM" id="CLU_015803_1_0_6"/>
<dbReference type="OrthoDB" id="9808135at2"/>
<dbReference type="PhylomeDB" id="Q88NS2"/>
<dbReference type="BioCyc" id="PPUT160488:G1G01-1210-MONOMER"/>
<dbReference type="Proteomes" id="UP000000556">
    <property type="component" value="Chromosome"/>
</dbReference>
<dbReference type="GO" id="GO:0005886">
    <property type="term" value="C:plasma membrane"/>
    <property type="evidence" value="ECO:0007669"/>
    <property type="project" value="UniProtKB-SubCell"/>
</dbReference>
<dbReference type="GO" id="GO:0015385">
    <property type="term" value="F:sodium:proton antiporter activity"/>
    <property type="evidence" value="ECO:0007669"/>
    <property type="project" value="TreeGrafter"/>
</dbReference>
<dbReference type="GO" id="GO:0006885">
    <property type="term" value="P:regulation of pH"/>
    <property type="evidence" value="ECO:0007669"/>
    <property type="project" value="InterPro"/>
</dbReference>
<dbReference type="Gene3D" id="1.20.1530.10">
    <property type="entry name" value="Na+/H+ antiporter like domain"/>
    <property type="match status" value="1"/>
</dbReference>
<dbReference type="HAMAP" id="MF_01844">
    <property type="entry name" value="NhaA"/>
    <property type="match status" value="1"/>
</dbReference>
<dbReference type="InterPro" id="IPR023171">
    <property type="entry name" value="Na/H_antiporter_dom_sf"/>
</dbReference>
<dbReference type="InterPro" id="IPR004670">
    <property type="entry name" value="NhaA"/>
</dbReference>
<dbReference type="NCBIfam" id="TIGR00773">
    <property type="entry name" value="NhaA"/>
    <property type="match status" value="1"/>
</dbReference>
<dbReference type="NCBIfam" id="NF007111">
    <property type="entry name" value="PRK09560.1"/>
    <property type="match status" value="1"/>
</dbReference>
<dbReference type="NCBIfam" id="NF007112">
    <property type="entry name" value="PRK09561.1"/>
    <property type="match status" value="1"/>
</dbReference>
<dbReference type="PANTHER" id="PTHR30341:SF0">
    <property type="entry name" value="NA(+)_H(+) ANTIPORTER NHAA"/>
    <property type="match status" value="1"/>
</dbReference>
<dbReference type="PANTHER" id="PTHR30341">
    <property type="entry name" value="SODIUM ION/PROTON ANTIPORTER NHAA-RELATED"/>
    <property type="match status" value="1"/>
</dbReference>
<dbReference type="Pfam" id="PF06965">
    <property type="entry name" value="Na_H_antiport_1"/>
    <property type="match status" value="1"/>
</dbReference>
<name>NHAA1_PSEPK</name>
<feature type="chain" id="PRO_0000334373" description="Na(+)/H(+) antiporter NhaA 1">
    <location>
        <begin position="1"/>
        <end position="397"/>
    </location>
</feature>
<feature type="transmembrane region" description="Helical" evidence="1">
    <location>
        <begin position="15"/>
        <end position="35"/>
    </location>
</feature>
<feature type="transmembrane region" description="Helical" evidence="1">
    <location>
        <begin position="42"/>
        <end position="62"/>
    </location>
</feature>
<feature type="transmembrane region" description="Helical" evidence="1">
    <location>
        <begin position="65"/>
        <end position="85"/>
    </location>
</feature>
<feature type="transmembrane region" description="Helical" evidence="1">
    <location>
        <begin position="101"/>
        <end position="121"/>
    </location>
</feature>
<feature type="transmembrane region" description="Helical" evidence="1">
    <location>
        <begin position="129"/>
        <end position="149"/>
    </location>
</feature>
<feature type="transmembrane region" description="Helical" evidence="1">
    <location>
        <begin position="160"/>
        <end position="180"/>
    </location>
</feature>
<feature type="transmembrane region" description="Helical" evidence="1">
    <location>
        <begin position="183"/>
        <end position="203"/>
    </location>
</feature>
<feature type="transmembrane region" description="Helical" evidence="1">
    <location>
        <begin position="219"/>
        <end position="241"/>
    </location>
</feature>
<feature type="transmembrane region" description="Helical" evidence="1">
    <location>
        <begin position="265"/>
        <end position="285"/>
    </location>
</feature>
<feature type="transmembrane region" description="Helical" evidence="1">
    <location>
        <begin position="299"/>
        <end position="319"/>
    </location>
</feature>
<feature type="transmembrane region" description="Helical" evidence="1">
    <location>
        <begin position="335"/>
        <end position="355"/>
    </location>
</feature>
<feature type="transmembrane region" description="Helical" evidence="1">
    <location>
        <begin position="370"/>
        <end position="390"/>
    </location>
</feature>
<keyword id="KW-0050">Antiport</keyword>
<keyword id="KW-0997">Cell inner membrane</keyword>
<keyword id="KW-1003">Cell membrane</keyword>
<keyword id="KW-0406">Ion transport</keyword>
<keyword id="KW-0472">Membrane</keyword>
<keyword id="KW-1185">Reference proteome</keyword>
<keyword id="KW-0915">Sodium</keyword>
<keyword id="KW-0739">Sodium transport</keyword>
<keyword id="KW-0812">Transmembrane</keyword>
<keyword id="KW-1133">Transmembrane helix</keyword>
<keyword id="KW-0813">Transport</keyword>
<organism>
    <name type="scientific">Pseudomonas putida (strain ATCC 47054 / DSM 6125 / CFBP 8728 / NCIMB 11950 / KT2440)</name>
    <dbReference type="NCBI Taxonomy" id="160488"/>
    <lineage>
        <taxon>Bacteria</taxon>
        <taxon>Pseudomonadati</taxon>
        <taxon>Pseudomonadota</taxon>
        <taxon>Gammaproteobacteria</taxon>
        <taxon>Pseudomonadales</taxon>
        <taxon>Pseudomonadaceae</taxon>
        <taxon>Pseudomonas</taxon>
    </lineage>
</organism>
<accession>Q88NS2</accession>
<reference key="1">
    <citation type="journal article" date="2002" name="Environ. Microbiol.">
        <title>Complete genome sequence and comparative analysis of the metabolically versatile Pseudomonas putida KT2440.</title>
        <authorList>
            <person name="Nelson K.E."/>
            <person name="Weinel C."/>
            <person name="Paulsen I.T."/>
            <person name="Dodson R.J."/>
            <person name="Hilbert H."/>
            <person name="Martins dos Santos V.A.P."/>
            <person name="Fouts D.E."/>
            <person name="Gill S.R."/>
            <person name="Pop M."/>
            <person name="Holmes M."/>
            <person name="Brinkac L.M."/>
            <person name="Beanan M.J."/>
            <person name="DeBoy R.T."/>
            <person name="Daugherty S.C."/>
            <person name="Kolonay J.F."/>
            <person name="Madupu R."/>
            <person name="Nelson W.C."/>
            <person name="White O."/>
            <person name="Peterson J.D."/>
            <person name="Khouri H.M."/>
            <person name="Hance I."/>
            <person name="Chris Lee P."/>
            <person name="Holtzapple E.K."/>
            <person name="Scanlan D."/>
            <person name="Tran K."/>
            <person name="Moazzez A."/>
            <person name="Utterback T.R."/>
            <person name="Rizzo M."/>
            <person name="Lee K."/>
            <person name="Kosack D."/>
            <person name="Moestl D."/>
            <person name="Wedler H."/>
            <person name="Lauber J."/>
            <person name="Stjepandic D."/>
            <person name="Hoheisel J."/>
            <person name="Straetz M."/>
            <person name="Heim S."/>
            <person name="Kiewitz C."/>
            <person name="Eisen J.A."/>
            <person name="Timmis K.N."/>
            <person name="Duesterhoeft A."/>
            <person name="Tuemmler B."/>
            <person name="Fraser C.M."/>
        </authorList>
    </citation>
    <scope>NUCLEOTIDE SEQUENCE [LARGE SCALE GENOMIC DNA]</scope>
    <source>
        <strain>ATCC 47054 / DSM 6125 / CFBP 8728 / NCIMB 11950 / KT2440</strain>
    </source>
</reference>
<gene>
    <name evidence="1" type="primary">nhaA1</name>
    <name type="ordered locus">PP_1132</name>
</gene>
<proteinExistence type="inferred from homology"/>